<reference key="1">
    <citation type="journal article" date="1999" name="Gene">
        <title>Characterization of xnp-1, a Caenorhabditis elegans gene similar to the human XNP/ATR-X gene.</title>
        <authorList>
            <person name="Villard L."/>
            <person name="Fontes M."/>
            <person name="Ewbank J.J."/>
        </authorList>
    </citation>
    <scope>NUCLEOTIDE SEQUENCE [MRNA]</scope>
</reference>
<reference key="2">
    <citation type="journal article" date="1998" name="Science">
        <title>Genome sequence of the nematode C. elegans: a platform for investigating biology.</title>
        <authorList>
            <consortium name="The C. elegans sequencing consortium"/>
        </authorList>
    </citation>
    <scope>NUCLEOTIDE SEQUENCE [LARGE SCALE GENOMIC DNA]</scope>
    <source>
        <strain>Bristol N2</strain>
    </source>
</reference>
<reference key="3">
    <citation type="journal article" date="2004" name="Dev. Biol.">
        <title>lin-35/Rb and xnp-1/ATR-X function redundantly to control somatic gonad development in C. elegans.</title>
        <authorList>
            <person name="Bender A.M."/>
            <person name="Wells O."/>
            <person name="Fay D.S."/>
        </authorList>
    </citation>
    <scope>FUNCTION</scope>
    <scope>DEVELOPMENTAL STAGE</scope>
    <scope>DISRUPTION PHENOTYPE</scope>
    <scope>MUTAGENESIS OF ARG-1130</scope>
</reference>
<reference key="4">
    <citation type="journal article" date="2005" name="Dev. Biol.">
        <title>XNP-1/ATR-X acts with RB, HP1 and the NuRD complex during larval development in C. elegans.</title>
        <authorList>
            <person name="Cardoso C."/>
            <person name="Couillault C."/>
            <person name="Mignon-Ravix C."/>
            <person name="Millet A."/>
            <person name="Ewbank J.J."/>
            <person name="Fontes M."/>
            <person name="Pujol N."/>
        </authorList>
    </citation>
    <scope>FUNCTION</scope>
    <scope>DEVELOPMENTAL STAGE</scope>
    <scope>DISRUPTION PHENOTYPE</scope>
</reference>
<protein>
    <recommendedName>
        <fullName>Transcriptional regulator ATRX homolog</fullName>
        <ecNumber>3.6.4.12</ecNumber>
    </recommendedName>
    <alternativeName>
        <fullName>ATP-dependent helicase xnp-1</fullName>
    </alternativeName>
    <alternativeName>
        <fullName>X-linked nuclear protein 1</fullName>
    </alternativeName>
</protein>
<accession>Q9U7E0</accession>
<accession>O02061</accession>
<keyword id="KW-0067">ATP-binding</keyword>
<keyword id="KW-0227">DNA damage</keyword>
<keyword id="KW-0234">DNA repair</keyword>
<keyword id="KW-0238">DNA-binding</keyword>
<keyword id="KW-0347">Helicase</keyword>
<keyword id="KW-0378">Hydrolase</keyword>
<keyword id="KW-0547">Nucleotide-binding</keyword>
<keyword id="KW-0539">Nucleus</keyword>
<keyword id="KW-1185">Reference proteome</keyword>
<sequence length="1359" mass="156193">MRVGVSESEDSDGHVIEDEDLEMARQIENERKEKRAQKLKEKREREGKPPPKKRPAKKRKASSSEEDDDDEEESPRKSSKKSRKRAKSESESDESDEEEDRKKSKSKKKVDQKKKEKSKKKRTTSSSEDEDSDEEREQKSKKKSKKTKKQTSSESSEESEEERKVKKSKKNKEKSVKKRAETSEESDEDEKPSKKSKKGLKKKAKSESESESEDEKEVKKSKKKSKKVVKKESESEDEAPEKKKTEKRKRSKTSSEESSESEKSDEEEEEKESSPKPKKKKPLAVKKLSSDEESEESDVEVLPQKKKRGAVTLISDSEDEKDQKSESEASDVEEKVSKKKAKKQESSESGSDSSEGSITVNRKSKKKEKPEKKKKGIIMDSSKLQKETIDAERAEKERRKRLEKKQKEFNGIVLEEGEDLTEMLTGTSSQRKLKSVVLDPDSSTVDEESKKPVEVHNSLVRILKPHQAHGIQFMYDCACESLDRLDTEGSGGILAHCMGLGKTLQVITFLHTVLMHEKIGEKCKRVLVVVPKNVIINWFKEFQKWLVDNDEELDTIDVNELDSYKTIEDRRRALKAWHSSKTPSVMIIGYDLFRILTVEDDPKKKKPKNRNRRLEKAKEDFRKYLQNPGPDMVVCDEAHKLKNDDSALSKCMVKILTKRRICLTGTPLQNNLMEYHCMVNFVKPGLLGTKTEFANRFVNIINRGRTKDASPLEVSFMKRRCHVLYDHLKKCVDRKDYRVLTEAIPPKQEYVINVRQTERQCALYNAFLNDIVGDSGLSKRLLPDYHMFSRIWTHPYQLVLHEQRMERERVMREDAEEEADFIDDGDGSESESEGSFKSGSESDSGKSVVLSSDDEGSSKKKKNGNKPEIKKTAPQKKRKFLNSDDEDEEDGEDTAMAILQDGIRQSKRLAGEEADLRDTDTPPEYTGWFARLGLVKEEDRDDFALSNKLILLVEIIKKCEEIGDKLLVFSQSLESLTLIKRMLEYMAGTGQWFADGHEALNAEGEETWSWLEGEDYMTIDGSVQSGKRDAVQTSFNDPLNLRARLMLISTRAGSLGTNMVAANRVIIFDACWNPSHDTQSLFRVYRFGQTKPVYIYRFIAQGTMEERIYKRQVTKESTSMRVVDEAQIQRHYLGNDLTELYQFTPSTFDPDVEISCAPPKDRLLADVIHKNQHAVVDYIEHDTLFANVEDEKLTEQEMKDAWTDYEKDKSGMPVRAQYAAPPMPGFPNGMIVGQNVQALLQNRMNQGIRVDQMQHDILFKELQKMRIKDAGTAVKIVLLRNLLEQILPYIPDEMRGGMSEFNTHFIRLVHETDRKMETPADLLRKSLESFKTVIKMVKMIPTCREPLARMTRDYPYLFA</sequence>
<dbReference type="EC" id="3.6.4.12"/>
<dbReference type="EMBL" id="AF134186">
    <property type="protein sequence ID" value="AAD55361.1"/>
    <property type="molecule type" value="mRNA"/>
</dbReference>
<dbReference type="EMBL" id="FO080106">
    <property type="protein sequence ID" value="CCD61253.1"/>
    <property type="molecule type" value="Genomic_DNA"/>
</dbReference>
<dbReference type="PIR" id="T34036">
    <property type="entry name" value="T34036"/>
</dbReference>
<dbReference type="RefSeq" id="NP_001020958.1">
    <property type="nucleotide sequence ID" value="NM_001025787.2"/>
</dbReference>
<dbReference type="BioGRID" id="37541">
    <property type="interactions" value="1"/>
</dbReference>
<dbReference type="FunCoup" id="Q9U7E0">
    <property type="interactions" value="1360"/>
</dbReference>
<dbReference type="STRING" id="6239.B0041.7.2"/>
<dbReference type="iPTMnet" id="Q9U7E0"/>
<dbReference type="PaxDb" id="6239-B0041.7"/>
<dbReference type="PeptideAtlas" id="Q9U7E0"/>
<dbReference type="EnsemblMetazoa" id="B0041.7.1">
    <property type="protein sequence ID" value="B0041.7.1"/>
    <property type="gene ID" value="WBGene00006961"/>
</dbReference>
<dbReference type="GeneID" id="172077"/>
<dbReference type="KEGG" id="cel:CELE_B0041.7"/>
<dbReference type="UCSC" id="B0041.7">
    <property type="organism name" value="c. elegans"/>
</dbReference>
<dbReference type="AGR" id="WB:WBGene00006961"/>
<dbReference type="CTD" id="172077"/>
<dbReference type="WormBase" id="B0041.7">
    <property type="protein sequence ID" value="CE17314"/>
    <property type="gene ID" value="WBGene00006961"/>
    <property type="gene designation" value="xnp-1"/>
</dbReference>
<dbReference type="eggNOG" id="KOG1015">
    <property type="taxonomic scope" value="Eukaryota"/>
</dbReference>
<dbReference type="GeneTree" id="ENSGT00940000155902"/>
<dbReference type="HOGENOM" id="CLU_000315_11_4_1"/>
<dbReference type="InParanoid" id="Q9U7E0"/>
<dbReference type="OrthoDB" id="2020972at2759"/>
<dbReference type="PhylomeDB" id="Q9U7E0"/>
<dbReference type="PRO" id="PR:Q9U7E0"/>
<dbReference type="Proteomes" id="UP000001940">
    <property type="component" value="Chromosome I"/>
</dbReference>
<dbReference type="Bgee" id="WBGene00006961">
    <property type="expression patterns" value="Expressed in embryo and 4 other cell types or tissues"/>
</dbReference>
<dbReference type="GO" id="GO:0005634">
    <property type="term" value="C:nucleus"/>
    <property type="evidence" value="ECO:0000318"/>
    <property type="project" value="GO_Central"/>
</dbReference>
<dbReference type="GO" id="GO:0005524">
    <property type="term" value="F:ATP binding"/>
    <property type="evidence" value="ECO:0007669"/>
    <property type="project" value="UniProtKB-KW"/>
</dbReference>
<dbReference type="GO" id="GO:0016887">
    <property type="term" value="F:ATP hydrolysis activity"/>
    <property type="evidence" value="ECO:0007669"/>
    <property type="project" value="InterPro"/>
</dbReference>
<dbReference type="GO" id="GO:0140658">
    <property type="term" value="F:ATP-dependent chromatin remodeler activity"/>
    <property type="evidence" value="ECO:0000318"/>
    <property type="project" value="GO_Central"/>
</dbReference>
<dbReference type="GO" id="GO:0003677">
    <property type="term" value="F:DNA binding"/>
    <property type="evidence" value="ECO:0007669"/>
    <property type="project" value="UniProtKB-KW"/>
</dbReference>
<dbReference type="GO" id="GO:0004386">
    <property type="term" value="F:helicase activity"/>
    <property type="evidence" value="ECO:0007669"/>
    <property type="project" value="UniProtKB-KW"/>
</dbReference>
<dbReference type="GO" id="GO:0003712">
    <property type="term" value="F:transcription coregulator activity"/>
    <property type="evidence" value="ECO:0000318"/>
    <property type="project" value="GO_Central"/>
</dbReference>
<dbReference type="GO" id="GO:0006325">
    <property type="term" value="P:chromatin organization"/>
    <property type="evidence" value="ECO:0000318"/>
    <property type="project" value="GO_Central"/>
</dbReference>
<dbReference type="GO" id="GO:0006281">
    <property type="term" value="P:DNA repair"/>
    <property type="evidence" value="ECO:0007669"/>
    <property type="project" value="UniProtKB-KW"/>
</dbReference>
<dbReference type="GO" id="GO:0009792">
    <property type="term" value="P:embryo development ending in birth or egg hatching"/>
    <property type="evidence" value="ECO:0000315"/>
    <property type="project" value="WormBase"/>
</dbReference>
<dbReference type="GO" id="GO:0008406">
    <property type="term" value="P:gonad development"/>
    <property type="evidence" value="ECO:0000315"/>
    <property type="project" value="WormBase"/>
</dbReference>
<dbReference type="GO" id="GO:0002009">
    <property type="term" value="P:morphogenesis of an epithelium"/>
    <property type="evidence" value="ECO:0000315"/>
    <property type="project" value="WormBase"/>
</dbReference>
<dbReference type="GO" id="GO:0022414">
    <property type="term" value="P:reproductive process"/>
    <property type="evidence" value="ECO:0000315"/>
    <property type="project" value="WormBase"/>
</dbReference>
<dbReference type="GO" id="GO:0040025">
    <property type="term" value="P:vulval development"/>
    <property type="evidence" value="ECO:0000315"/>
    <property type="project" value="WormBase"/>
</dbReference>
<dbReference type="CDD" id="cd18793">
    <property type="entry name" value="SF2_C_SNF"/>
    <property type="match status" value="1"/>
</dbReference>
<dbReference type="Gene3D" id="3.40.50.300">
    <property type="entry name" value="P-loop containing nucleotide triphosphate hydrolases"/>
    <property type="match status" value="1"/>
</dbReference>
<dbReference type="Gene3D" id="3.40.50.10810">
    <property type="entry name" value="Tandem AAA-ATPase domain"/>
    <property type="match status" value="1"/>
</dbReference>
<dbReference type="InterPro" id="IPR044574">
    <property type="entry name" value="ARIP4-like"/>
</dbReference>
<dbReference type="InterPro" id="IPR014001">
    <property type="entry name" value="Helicase_ATP-bd"/>
</dbReference>
<dbReference type="InterPro" id="IPR001650">
    <property type="entry name" value="Helicase_C-like"/>
</dbReference>
<dbReference type="InterPro" id="IPR027417">
    <property type="entry name" value="P-loop_NTPase"/>
</dbReference>
<dbReference type="InterPro" id="IPR038718">
    <property type="entry name" value="SNF2-like_sf"/>
</dbReference>
<dbReference type="InterPro" id="IPR049730">
    <property type="entry name" value="SNF2/RAD54-like_C"/>
</dbReference>
<dbReference type="InterPro" id="IPR000330">
    <property type="entry name" value="SNF2_N"/>
</dbReference>
<dbReference type="PANTHER" id="PTHR45797">
    <property type="entry name" value="RAD54-LIKE"/>
    <property type="match status" value="1"/>
</dbReference>
<dbReference type="PANTHER" id="PTHR45797:SF3">
    <property type="entry name" value="TRANSCRIPTIONAL REGULATOR ATRX HOMOLOG"/>
    <property type="match status" value="1"/>
</dbReference>
<dbReference type="Pfam" id="PF00271">
    <property type="entry name" value="Helicase_C"/>
    <property type="match status" value="1"/>
</dbReference>
<dbReference type="Pfam" id="PF00176">
    <property type="entry name" value="SNF2-rel_dom"/>
    <property type="match status" value="1"/>
</dbReference>
<dbReference type="SMART" id="SM00487">
    <property type="entry name" value="DEXDc"/>
    <property type="match status" value="1"/>
</dbReference>
<dbReference type="SMART" id="SM00490">
    <property type="entry name" value="HELICc"/>
    <property type="match status" value="1"/>
</dbReference>
<dbReference type="SUPFAM" id="SSF52540">
    <property type="entry name" value="P-loop containing nucleoside triphosphate hydrolases"/>
    <property type="match status" value="2"/>
</dbReference>
<dbReference type="PROSITE" id="PS51192">
    <property type="entry name" value="HELICASE_ATP_BIND_1"/>
    <property type="match status" value="1"/>
</dbReference>
<dbReference type="PROSITE" id="PS51194">
    <property type="entry name" value="HELICASE_CTER"/>
    <property type="match status" value="1"/>
</dbReference>
<name>ATRX_CAEEL</name>
<organism>
    <name type="scientific">Caenorhabditis elegans</name>
    <dbReference type="NCBI Taxonomy" id="6239"/>
    <lineage>
        <taxon>Eukaryota</taxon>
        <taxon>Metazoa</taxon>
        <taxon>Ecdysozoa</taxon>
        <taxon>Nematoda</taxon>
        <taxon>Chromadorea</taxon>
        <taxon>Rhabditida</taxon>
        <taxon>Rhabditina</taxon>
        <taxon>Rhabditomorpha</taxon>
        <taxon>Rhabditoidea</taxon>
        <taxon>Rhabditidae</taxon>
        <taxon>Peloderinae</taxon>
        <taxon>Caenorhabditis</taxon>
    </lineage>
</organism>
<gene>
    <name evidence="7" type="primary">xnp-1</name>
    <name evidence="7" type="ORF">B0041.7</name>
</gene>
<comment type="function">
    <text evidence="4 5">Required for embryonic development and gonadogenesis. Also, functions redundantly with the transcriptional repressor lin-35 to regulate somatic gonad development.</text>
</comment>
<comment type="catalytic activity">
    <reaction>
        <text>ATP + H2O = ADP + phosphate + H(+)</text>
        <dbReference type="Rhea" id="RHEA:13065"/>
        <dbReference type="ChEBI" id="CHEBI:15377"/>
        <dbReference type="ChEBI" id="CHEBI:15378"/>
        <dbReference type="ChEBI" id="CHEBI:30616"/>
        <dbReference type="ChEBI" id="CHEBI:43474"/>
        <dbReference type="ChEBI" id="CHEBI:456216"/>
        <dbReference type="EC" id="3.6.4.12"/>
    </reaction>
</comment>
<comment type="subcellular location">
    <subcellularLocation>
        <location>Nucleus</location>
    </subcellularLocation>
</comment>
<comment type="developmental stage">
    <text evidence="4 5">Expressed in most cells during embryonic development (PubMed:15328017, PubMed:15649460). First expressed at around the 100-200 cell stage of embryogenesis (PubMed:15328017, PubMed:15649460). Expression was absent or reduced in intestinal cell lineages during this time. Highly expressed in neuronal cells of the head, ventral nerve cord and tail during the late stages of embryogenesis (PubMed:15328017). Highly expressed in all dividing cells after hatching (PubMed:15649460). Highly expressed in the P lineage during the L1 stage of larval development (PubMed:15649460). During larval development, mainly expressed in the neurons, but there is also high expression in the junctional cells of the spermatheca and uterus, and weak expression in cells of the somatic gonad including the distal tip cells (PubMed:15328017).</text>
</comment>
<comment type="disruption phenotype">
    <text evidence="4 5">Temperature-sensitive with 38% embryonic lethality at 25 degrees Celsius (PubMed:15649460). A large proportion of surviving animals are sterile. Surviving animals also have gonad developmental defects such as defective gonadal arm growth and as a result irregular distal tip cell migration, and 24% of animals had a protruding vulva phenotype (PubMed:15649460). Reduced brood size (PubMed:15328017). Double knockout with lin-35 results in 43% embryonic lethality (PubMed:15328017). Surviving animals develop slowly, are small, sterile and display male and female gonad developmental defects characterized by shorter gonadal arms, fewer germ cells, an everted vulva phenotype, and failed formation of sheath and spermathecal cells (PubMed:15328017). RNAi-mediated knockdown of lin-35 or hpl-2 results in larval arrest at 25 degrees Celsius in an xpn-1 mutant background (PubMed:15649460).</text>
</comment>
<comment type="similarity">
    <text evidence="6">Belongs to the SNF2/RAD54 helicase family.</text>
</comment>
<evidence type="ECO:0000255" key="1">
    <source>
        <dbReference type="PROSITE-ProRule" id="PRU00541"/>
    </source>
</evidence>
<evidence type="ECO:0000255" key="2">
    <source>
        <dbReference type="PROSITE-ProRule" id="PRU00542"/>
    </source>
</evidence>
<evidence type="ECO:0000256" key="3">
    <source>
        <dbReference type="SAM" id="MobiDB-lite"/>
    </source>
</evidence>
<evidence type="ECO:0000269" key="4">
    <source>
    </source>
</evidence>
<evidence type="ECO:0000269" key="5">
    <source>
    </source>
</evidence>
<evidence type="ECO:0000305" key="6"/>
<evidence type="ECO:0000312" key="7">
    <source>
        <dbReference type="WormBase" id="B0041.7"/>
    </source>
</evidence>
<proteinExistence type="evidence at protein level"/>
<feature type="chain" id="PRO_0000074308" description="Transcriptional regulator ATRX homolog">
    <location>
        <begin position="1"/>
        <end position="1359"/>
    </location>
</feature>
<feature type="domain" description="Helicase ATP-binding" evidence="1">
    <location>
        <begin position="483"/>
        <end position="685"/>
    </location>
</feature>
<feature type="domain" description="Helicase C-terminal" evidence="2">
    <location>
        <begin position="951"/>
        <end position="1134"/>
    </location>
</feature>
<feature type="region of interest" description="Disordered" evidence="3">
    <location>
        <begin position="1"/>
        <end position="402"/>
    </location>
</feature>
<feature type="region of interest" description="Disordered" evidence="3">
    <location>
        <begin position="809"/>
        <end position="891"/>
    </location>
</feature>
<feature type="short sequence motif" description="DEAH box">
    <location>
        <begin position="636"/>
        <end position="639"/>
    </location>
</feature>
<feature type="compositionally biased region" description="Basic and acidic residues" evidence="3">
    <location>
        <begin position="11"/>
        <end position="49"/>
    </location>
</feature>
<feature type="compositionally biased region" description="Basic residues" evidence="3">
    <location>
        <begin position="50"/>
        <end position="61"/>
    </location>
</feature>
<feature type="compositionally biased region" description="Acidic residues" evidence="3">
    <location>
        <begin position="64"/>
        <end position="73"/>
    </location>
</feature>
<feature type="compositionally biased region" description="Basic residues" evidence="3">
    <location>
        <begin position="77"/>
        <end position="86"/>
    </location>
</feature>
<feature type="compositionally biased region" description="Basic residues" evidence="3">
    <location>
        <begin position="103"/>
        <end position="123"/>
    </location>
</feature>
<feature type="compositionally biased region" description="Basic residues" evidence="3">
    <location>
        <begin position="139"/>
        <end position="149"/>
    </location>
</feature>
<feature type="compositionally biased region" description="Basic residues" evidence="3">
    <location>
        <begin position="165"/>
        <end position="177"/>
    </location>
</feature>
<feature type="compositionally biased region" description="Basic residues" evidence="3">
    <location>
        <begin position="194"/>
        <end position="204"/>
    </location>
</feature>
<feature type="compositionally biased region" description="Basic residues" evidence="3">
    <location>
        <begin position="219"/>
        <end position="229"/>
    </location>
</feature>
<feature type="compositionally biased region" description="Acidic residues" evidence="3">
    <location>
        <begin position="257"/>
        <end position="271"/>
    </location>
</feature>
<feature type="compositionally biased region" description="Basic and acidic residues" evidence="3">
    <location>
        <begin position="321"/>
        <end position="336"/>
    </location>
</feature>
<feature type="compositionally biased region" description="Low complexity" evidence="3">
    <location>
        <begin position="347"/>
        <end position="357"/>
    </location>
</feature>
<feature type="compositionally biased region" description="Basic residues" evidence="3">
    <location>
        <begin position="362"/>
        <end position="376"/>
    </location>
</feature>
<feature type="compositionally biased region" description="Basic and acidic residues" evidence="3">
    <location>
        <begin position="383"/>
        <end position="397"/>
    </location>
</feature>
<feature type="compositionally biased region" description="Acidic residues" evidence="3">
    <location>
        <begin position="814"/>
        <end position="832"/>
    </location>
</feature>
<feature type="compositionally biased region" description="Low complexity" evidence="3">
    <location>
        <begin position="833"/>
        <end position="847"/>
    </location>
</feature>
<feature type="binding site" evidence="1">
    <location>
        <begin position="496"/>
        <end position="503"/>
    </location>
    <ligand>
        <name>ATP</name>
        <dbReference type="ChEBI" id="CHEBI:30616"/>
    </ligand>
</feature>
<feature type="mutagenesis site" description="In fd2; viable. Gonad morphological defects in a lin-35 RNAi background." evidence="4">
    <original>R</original>
    <variation>K</variation>
    <location>
        <position position="1130"/>
    </location>
</feature>
<feature type="sequence conflict" description="In Ref. 2; CCD61253." evidence="6" ref="2">
    <original>C</original>
    <variation>F</variation>
    <location>
        <position position="479"/>
    </location>
</feature>